<reference key="1">
    <citation type="journal article" date="1998" name="Nature">
        <title>Deciphering the biology of Mycobacterium tuberculosis from the complete genome sequence.</title>
        <authorList>
            <person name="Cole S.T."/>
            <person name="Brosch R."/>
            <person name="Parkhill J."/>
            <person name="Garnier T."/>
            <person name="Churcher C.M."/>
            <person name="Harris D.E."/>
            <person name="Gordon S.V."/>
            <person name="Eiglmeier K."/>
            <person name="Gas S."/>
            <person name="Barry C.E. III"/>
            <person name="Tekaia F."/>
            <person name="Badcock K."/>
            <person name="Basham D."/>
            <person name="Brown D."/>
            <person name="Chillingworth T."/>
            <person name="Connor R."/>
            <person name="Davies R.M."/>
            <person name="Devlin K."/>
            <person name="Feltwell T."/>
            <person name="Gentles S."/>
            <person name="Hamlin N."/>
            <person name="Holroyd S."/>
            <person name="Hornsby T."/>
            <person name="Jagels K."/>
            <person name="Krogh A."/>
            <person name="McLean J."/>
            <person name="Moule S."/>
            <person name="Murphy L.D."/>
            <person name="Oliver S."/>
            <person name="Osborne J."/>
            <person name="Quail M.A."/>
            <person name="Rajandream M.A."/>
            <person name="Rogers J."/>
            <person name="Rutter S."/>
            <person name="Seeger K."/>
            <person name="Skelton S."/>
            <person name="Squares S."/>
            <person name="Squares R."/>
            <person name="Sulston J.E."/>
            <person name="Taylor K."/>
            <person name="Whitehead S."/>
            <person name="Barrell B.G."/>
        </authorList>
    </citation>
    <scope>NUCLEOTIDE SEQUENCE [LARGE SCALE GENOMIC DNA]</scope>
    <source>
        <strain>ATCC 25618 / H37Rv</strain>
    </source>
</reference>
<reference key="2">
    <citation type="journal article" date="2008" name="BMC Syst. Biol.">
        <title>targetTB: a target identification pipeline for Mycobacterium tuberculosis through an interactome, reactome and genome-scale structural analysis.</title>
        <authorList>
            <person name="Raman K."/>
            <person name="Yeturu K."/>
            <person name="Chandra N."/>
        </authorList>
    </citation>
    <scope>IDENTIFICATION AS A DRUG TARGET [LARGE SCALE ANALYSIS]</scope>
</reference>
<reference key="3">
    <citation type="journal article" date="2011" name="Biochemistry (Mosc.)">
        <title>Characterization of a bifunctional beta-lactamase/ribonuclease and its interaction with a chaperone-like protein in the pathogen Mycobacterium tuberculosis H37Rv.</title>
        <authorList>
            <person name="Sun L."/>
            <person name="Zhang L."/>
            <person name="Zhang H."/>
            <person name="He Z.G."/>
        </authorList>
    </citation>
    <scope>FUNCTION</scope>
    <scope>INTERACTION WITH RNJ</scope>
    <source>
        <strain>ATCC 25618 / H37Rv</strain>
    </source>
</reference>
<reference key="4">
    <citation type="journal article" date="2011" name="Mol. Cell. Proteomics">
        <title>Proteogenomic analysis of Mycobacterium tuberculosis by high resolution mass spectrometry.</title>
        <authorList>
            <person name="Kelkar D.S."/>
            <person name="Kumar D."/>
            <person name="Kumar P."/>
            <person name="Balakrishnan L."/>
            <person name="Muthusamy B."/>
            <person name="Yadav A.K."/>
            <person name="Shrivastava P."/>
            <person name="Marimuthu A."/>
            <person name="Anand S."/>
            <person name="Sundaram H."/>
            <person name="Kingsbury R."/>
            <person name="Harsha H.C."/>
            <person name="Nair B."/>
            <person name="Prasad T.S."/>
            <person name="Chauhan D.S."/>
            <person name="Katoch K."/>
            <person name="Katoch V.M."/>
            <person name="Kumar P."/>
            <person name="Chaerkady R."/>
            <person name="Ramachandran S."/>
            <person name="Dash D."/>
            <person name="Pandey A."/>
        </authorList>
    </citation>
    <scope>IDENTIFICATION BY MASS SPECTROMETRY [LARGE SCALE ANALYSIS]</scope>
    <source>
        <strain>ATCC 25618 / H37Rv</strain>
    </source>
</reference>
<protein>
    <recommendedName>
        <fullName evidence="1">Chaperone protein DnaJ 2</fullName>
    </recommendedName>
</protein>
<organism>
    <name type="scientific">Mycobacterium tuberculosis (strain ATCC 25618 / H37Rv)</name>
    <dbReference type="NCBI Taxonomy" id="83332"/>
    <lineage>
        <taxon>Bacteria</taxon>
        <taxon>Bacillati</taxon>
        <taxon>Actinomycetota</taxon>
        <taxon>Actinomycetes</taxon>
        <taxon>Mycobacteriales</taxon>
        <taxon>Mycobacteriaceae</taxon>
        <taxon>Mycobacterium</taxon>
        <taxon>Mycobacterium tuberculosis complex</taxon>
    </lineage>
</organism>
<name>DNAJ2_MYCTU</name>
<gene>
    <name evidence="1" type="primary">dnaJ2</name>
    <name type="ordered locus">Rv2373c</name>
    <name type="ORF">MTCY27.07</name>
</gene>
<feature type="chain" id="PRO_0000070836" description="Chaperone protein DnaJ 2">
    <location>
        <begin position="1"/>
        <end position="382"/>
    </location>
</feature>
<feature type="domain" description="J" evidence="1">
    <location>
        <begin position="4"/>
        <end position="68"/>
    </location>
</feature>
<feature type="repeat" description="CXXCXGXG motif">
    <location>
        <begin position="145"/>
        <end position="152"/>
    </location>
</feature>
<feature type="repeat" description="CXXCXGXG motif">
    <location>
        <begin position="162"/>
        <end position="169"/>
    </location>
</feature>
<feature type="repeat" description="CXXCXGXG motif">
    <location>
        <begin position="188"/>
        <end position="195"/>
    </location>
</feature>
<feature type="repeat" description="CXXCXGXG motif">
    <location>
        <begin position="202"/>
        <end position="209"/>
    </location>
</feature>
<feature type="zinc finger region" description="CR-type" evidence="1">
    <location>
        <begin position="132"/>
        <end position="214"/>
    </location>
</feature>
<feature type="binding site" evidence="1">
    <location>
        <position position="145"/>
    </location>
    <ligand>
        <name>Zn(2+)</name>
        <dbReference type="ChEBI" id="CHEBI:29105"/>
        <label>1</label>
    </ligand>
</feature>
<feature type="binding site" evidence="1">
    <location>
        <position position="148"/>
    </location>
    <ligand>
        <name>Zn(2+)</name>
        <dbReference type="ChEBI" id="CHEBI:29105"/>
        <label>1</label>
    </ligand>
</feature>
<feature type="binding site" evidence="1">
    <location>
        <position position="162"/>
    </location>
    <ligand>
        <name>Zn(2+)</name>
        <dbReference type="ChEBI" id="CHEBI:29105"/>
        <label>2</label>
    </ligand>
</feature>
<feature type="binding site" evidence="1">
    <location>
        <position position="165"/>
    </location>
    <ligand>
        <name>Zn(2+)</name>
        <dbReference type="ChEBI" id="CHEBI:29105"/>
        <label>2</label>
    </ligand>
</feature>
<feature type="binding site" evidence="1">
    <location>
        <position position="188"/>
    </location>
    <ligand>
        <name>Zn(2+)</name>
        <dbReference type="ChEBI" id="CHEBI:29105"/>
        <label>2</label>
    </ligand>
</feature>
<feature type="binding site" evidence="1">
    <location>
        <position position="191"/>
    </location>
    <ligand>
        <name>Zn(2+)</name>
        <dbReference type="ChEBI" id="CHEBI:29105"/>
        <label>2</label>
    </ligand>
</feature>
<feature type="binding site" evidence="1">
    <location>
        <position position="202"/>
    </location>
    <ligand>
        <name>Zn(2+)</name>
        <dbReference type="ChEBI" id="CHEBI:29105"/>
        <label>1</label>
    </ligand>
</feature>
<feature type="binding site" evidence="1">
    <location>
        <position position="205"/>
    </location>
    <ligand>
        <name>Zn(2+)</name>
        <dbReference type="ChEBI" id="CHEBI:29105"/>
        <label>1</label>
    </ligand>
</feature>
<comment type="function">
    <text evidence="1 2">Participates actively in the response to hyperosmotic and heat shock by preventing the aggregation of stress-denatured proteins and by disaggregating proteins, also in an autonomous, DnaK-independent fashion. Unfolded proteins bind initially to DnaJ; upon interaction with the DnaJ-bound protein, DnaK hydrolyzes its bound ATP, resulting in the formation of a stable complex. GrpE releases ADP from DnaK; ATP binding to DnaK triggers the release of the substrate protein, thus completing the reaction cycle. Several rounds of ATP-dependent interactions between DnaJ, DnaK and GrpE are required for fully efficient folding. Also involved, together with DnaK and GrpE, in the DNA replication of plasmids through activation of initiation proteins (By similarity). Inhibits the beta-lactamase and RNase activity of RNase J.</text>
</comment>
<comment type="cofactor">
    <cofactor evidence="1">
        <name>Zn(2+)</name>
        <dbReference type="ChEBI" id="CHEBI:29105"/>
    </cofactor>
    <text evidence="1">Binds 2 Zn(2+) ions per monomer.</text>
</comment>
<comment type="subunit">
    <text evidence="1 2">Homodimer (By similarity). Interacts with RNase J.</text>
</comment>
<comment type="subcellular location">
    <subcellularLocation>
        <location evidence="1">Cytoplasm</location>
    </subcellularLocation>
</comment>
<comment type="domain">
    <text evidence="1">The J domain is necessary and sufficient to stimulate DnaK ATPase activity. Zinc center 1 plays an important role in the autonomous, DnaK-independent chaperone activity of DnaJ. Zinc center 2 is essential for interaction with DnaK and for DnaJ activity.</text>
</comment>
<comment type="miscellaneous">
    <text>Was identified as a high-confidence drug target.</text>
</comment>
<comment type="similarity">
    <text evidence="1">Belongs to the DnaJ family.</text>
</comment>
<dbReference type="EMBL" id="AL123456">
    <property type="protein sequence ID" value="CCP45161.1"/>
    <property type="molecule type" value="Genomic_DNA"/>
</dbReference>
<dbReference type="PIR" id="D70587">
    <property type="entry name" value="D70587"/>
</dbReference>
<dbReference type="RefSeq" id="NP_216889.1">
    <property type="nucleotide sequence ID" value="NC_000962.3"/>
</dbReference>
<dbReference type="SMR" id="P9WNV7"/>
<dbReference type="FunCoup" id="P9WNV7">
    <property type="interactions" value="475"/>
</dbReference>
<dbReference type="STRING" id="83332.Rv2373c"/>
<dbReference type="PaxDb" id="83332-Rv2373c"/>
<dbReference type="DNASU" id="886023"/>
<dbReference type="GeneID" id="886023"/>
<dbReference type="KEGG" id="mtu:Rv2373c"/>
<dbReference type="KEGG" id="mtv:RVBD_2373c"/>
<dbReference type="TubercuList" id="Rv2373c"/>
<dbReference type="eggNOG" id="COG0484">
    <property type="taxonomic scope" value="Bacteria"/>
</dbReference>
<dbReference type="InParanoid" id="P9WNV7"/>
<dbReference type="OrthoDB" id="9779889at2"/>
<dbReference type="PhylomeDB" id="P9WNV7"/>
<dbReference type="Proteomes" id="UP000001584">
    <property type="component" value="Chromosome"/>
</dbReference>
<dbReference type="GO" id="GO:0005737">
    <property type="term" value="C:cytoplasm"/>
    <property type="evidence" value="ECO:0000318"/>
    <property type="project" value="GO_Central"/>
</dbReference>
<dbReference type="GO" id="GO:0009274">
    <property type="term" value="C:peptidoglycan-based cell wall"/>
    <property type="evidence" value="ECO:0007005"/>
    <property type="project" value="MTBBASE"/>
</dbReference>
<dbReference type="GO" id="GO:0005524">
    <property type="term" value="F:ATP binding"/>
    <property type="evidence" value="ECO:0007669"/>
    <property type="project" value="InterPro"/>
</dbReference>
<dbReference type="GO" id="GO:0031072">
    <property type="term" value="F:heat shock protein binding"/>
    <property type="evidence" value="ECO:0007669"/>
    <property type="project" value="InterPro"/>
</dbReference>
<dbReference type="GO" id="GO:0051082">
    <property type="term" value="F:unfolded protein binding"/>
    <property type="evidence" value="ECO:0000318"/>
    <property type="project" value="GO_Central"/>
</dbReference>
<dbReference type="GO" id="GO:0008270">
    <property type="term" value="F:zinc ion binding"/>
    <property type="evidence" value="ECO:0007669"/>
    <property type="project" value="UniProtKB-UniRule"/>
</dbReference>
<dbReference type="GO" id="GO:0051085">
    <property type="term" value="P:chaperone cofactor-dependent protein refolding"/>
    <property type="evidence" value="ECO:0000318"/>
    <property type="project" value="GO_Central"/>
</dbReference>
<dbReference type="GO" id="GO:0006260">
    <property type="term" value="P:DNA replication"/>
    <property type="evidence" value="ECO:0007669"/>
    <property type="project" value="UniProtKB-KW"/>
</dbReference>
<dbReference type="GO" id="GO:0042026">
    <property type="term" value="P:protein refolding"/>
    <property type="evidence" value="ECO:0000318"/>
    <property type="project" value="GO_Central"/>
</dbReference>
<dbReference type="GO" id="GO:0009408">
    <property type="term" value="P:response to heat"/>
    <property type="evidence" value="ECO:0007669"/>
    <property type="project" value="InterPro"/>
</dbReference>
<dbReference type="CDD" id="cd06257">
    <property type="entry name" value="DnaJ"/>
    <property type="match status" value="1"/>
</dbReference>
<dbReference type="CDD" id="cd10747">
    <property type="entry name" value="DnaJ_C"/>
    <property type="match status" value="1"/>
</dbReference>
<dbReference type="CDD" id="cd10719">
    <property type="entry name" value="DnaJ_zf"/>
    <property type="match status" value="1"/>
</dbReference>
<dbReference type="FunFam" id="2.60.260.20:FF:000005">
    <property type="entry name" value="Chaperone protein dnaJ 1, mitochondrial"/>
    <property type="match status" value="1"/>
</dbReference>
<dbReference type="FunFam" id="2.10.230.10:FF:000002">
    <property type="entry name" value="Molecular chaperone DnaJ"/>
    <property type="match status" value="1"/>
</dbReference>
<dbReference type="Gene3D" id="6.20.20.10">
    <property type="match status" value="2"/>
</dbReference>
<dbReference type="Gene3D" id="1.10.287.110">
    <property type="entry name" value="DnaJ domain"/>
    <property type="match status" value="1"/>
</dbReference>
<dbReference type="Gene3D" id="2.60.260.20">
    <property type="entry name" value="Urease metallochaperone UreE, N-terminal domain"/>
    <property type="match status" value="2"/>
</dbReference>
<dbReference type="HAMAP" id="MF_01152">
    <property type="entry name" value="DnaJ"/>
    <property type="match status" value="1"/>
</dbReference>
<dbReference type="InterPro" id="IPR012724">
    <property type="entry name" value="DnaJ"/>
</dbReference>
<dbReference type="InterPro" id="IPR002939">
    <property type="entry name" value="DnaJ_C"/>
</dbReference>
<dbReference type="InterPro" id="IPR001623">
    <property type="entry name" value="DnaJ_domain"/>
</dbReference>
<dbReference type="InterPro" id="IPR008971">
    <property type="entry name" value="HSP40/DnaJ_pept-bd"/>
</dbReference>
<dbReference type="InterPro" id="IPR001305">
    <property type="entry name" value="HSP_DnaJ_Cys-rich_dom"/>
</dbReference>
<dbReference type="InterPro" id="IPR036410">
    <property type="entry name" value="HSP_DnaJ_Cys-rich_dom_sf"/>
</dbReference>
<dbReference type="InterPro" id="IPR036869">
    <property type="entry name" value="J_dom_sf"/>
</dbReference>
<dbReference type="NCBIfam" id="NF008035">
    <property type="entry name" value="PRK10767.1"/>
    <property type="match status" value="1"/>
</dbReference>
<dbReference type="NCBIfam" id="NF010871">
    <property type="entry name" value="PRK14278.1"/>
    <property type="match status" value="1"/>
</dbReference>
<dbReference type="PANTHER" id="PTHR43096:SF48">
    <property type="entry name" value="CHAPERONE PROTEIN DNAJ"/>
    <property type="match status" value="1"/>
</dbReference>
<dbReference type="PANTHER" id="PTHR43096">
    <property type="entry name" value="DNAJ HOMOLOG 1, MITOCHONDRIAL-RELATED"/>
    <property type="match status" value="1"/>
</dbReference>
<dbReference type="Pfam" id="PF00226">
    <property type="entry name" value="DnaJ"/>
    <property type="match status" value="1"/>
</dbReference>
<dbReference type="Pfam" id="PF01556">
    <property type="entry name" value="DnaJ_C"/>
    <property type="match status" value="1"/>
</dbReference>
<dbReference type="Pfam" id="PF00684">
    <property type="entry name" value="DnaJ_CXXCXGXG"/>
    <property type="match status" value="1"/>
</dbReference>
<dbReference type="PRINTS" id="PR00625">
    <property type="entry name" value="JDOMAIN"/>
</dbReference>
<dbReference type="SMART" id="SM00271">
    <property type="entry name" value="DnaJ"/>
    <property type="match status" value="1"/>
</dbReference>
<dbReference type="SUPFAM" id="SSF46565">
    <property type="entry name" value="Chaperone J-domain"/>
    <property type="match status" value="1"/>
</dbReference>
<dbReference type="SUPFAM" id="SSF57938">
    <property type="entry name" value="DnaJ/Hsp40 cysteine-rich domain"/>
    <property type="match status" value="1"/>
</dbReference>
<dbReference type="SUPFAM" id="SSF49493">
    <property type="entry name" value="HSP40/DnaJ peptide-binding domain"/>
    <property type="match status" value="2"/>
</dbReference>
<dbReference type="PROSITE" id="PS50076">
    <property type="entry name" value="DNAJ_2"/>
    <property type="match status" value="1"/>
</dbReference>
<dbReference type="PROSITE" id="PS51188">
    <property type="entry name" value="ZF_CR"/>
    <property type="match status" value="1"/>
</dbReference>
<accession>P9WNV7</accession>
<accession>L0TCB9</accession>
<accession>O05825</accession>
<accession>P63966</accession>
<evidence type="ECO:0000255" key="1">
    <source>
        <dbReference type="HAMAP-Rule" id="MF_01152"/>
    </source>
</evidence>
<evidence type="ECO:0000269" key="2">
    <source>
    </source>
</evidence>
<keyword id="KW-0143">Chaperone</keyword>
<keyword id="KW-0963">Cytoplasm</keyword>
<keyword id="KW-0235">DNA replication</keyword>
<keyword id="KW-0479">Metal-binding</keyword>
<keyword id="KW-1185">Reference proteome</keyword>
<keyword id="KW-0677">Repeat</keyword>
<keyword id="KW-0346">Stress response</keyword>
<keyword id="KW-0862">Zinc</keyword>
<keyword id="KW-0863">Zinc-finger</keyword>
<proteinExistence type="evidence at protein level"/>
<sequence>MARDYYGLLGVSKNASDADIKRAYRKLARELHPDVNPDEAAQAKFKEISVAYEVLSDPDKRRIVDLGGDPLESAAAGGNGFGGFGGLGDVFEAFFGGGFGGGAASRGPIGRVRPGSDSLLRMRLDLEECATGVTKQVTVDTAVLCDRCQGKGTNGDSVPIPCDTCGGRGEVQTVQRSLLGQMLTSRPCPTCRGVGVVIPDPCQQCMGDGRIRARREISVKIPAGVGDGMRVRLAAQGEVGPGGGPAGDLYVEVHEQAHDVFVREGDHLHCTVSVPMVDAALGVTVTVDAILDGLSEITIPPGTQPGSVITLRGRGMPHLRSNTRGDLHVHVEVVVPTRLDHQDIELLRELKGRRDREVAEVRSTHAAAGGLFSRLRETFTGR</sequence>